<gene>
    <name type="primary">LMF1</name>
    <name type="synonym">TMEM112</name>
</gene>
<evidence type="ECO:0000250" key="1">
    <source>
        <dbReference type="UniProtKB" id="Q3U3R4"/>
    </source>
</evidence>
<evidence type="ECO:0000250" key="2">
    <source>
        <dbReference type="UniProtKB" id="Q96S06"/>
    </source>
</evidence>
<evidence type="ECO:0000255" key="3"/>
<evidence type="ECO:0000256" key="4">
    <source>
        <dbReference type="SAM" id="MobiDB-lite"/>
    </source>
</evidence>
<evidence type="ECO:0000305" key="5"/>
<accession>Q0P5C0</accession>
<feature type="chain" id="PRO_0000276738" description="Lipase maturation factor 1">
    <location>
        <begin position="1"/>
        <end position="561"/>
    </location>
</feature>
<feature type="topological domain" description="Cytoplasmic" evidence="3">
    <location>
        <begin position="1"/>
        <end position="42"/>
    </location>
</feature>
<feature type="transmembrane region" description="Helical" evidence="3">
    <location>
        <begin position="43"/>
        <end position="65"/>
    </location>
</feature>
<feature type="topological domain" description="Lumenal" evidence="3">
    <location>
        <begin position="66"/>
        <end position="120"/>
    </location>
</feature>
<feature type="transmembrane region" description="Helical" evidence="3">
    <location>
        <begin position="121"/>
        <end position="144"/>
    </location>
</feature>
<feature type="topological domain" description="Cytoplasmic" evidence="3">
    <location>
        <begin position="145"/>
        <end position="200"/>
    </location>
</feature>
<feature type="transmembrane region" description="Helical" evidence="3">
    <location>
        <begin position="201"/>
        <end position="214"/>
    </location>
</feature>
<feature type="topological domain" description="Lumenal" evidence="3">
    <location>
        <begin position="215"/>
        <end position="285"/>
    </location>
</feature>
<feature type="transmembrane region" description="Helical" evidence="3">
    <location>
        <begin position="286"/>
        <end position="314"/>
    </location>
</feature>
<feature type="topological domain" description="Cytoplasmic" evidence="3">
    <location>
        <begin position="315"/>
        <end position="360"/>
    </location>
</feature>
<feature type="transmembrane region" description="Helical" evidence="3">
    <location>
        <begin position="361"/>
        <end position="382"/>
    </location>
</feature>
<feature type="topological domain" description="Lumenal" evidence="3">
    <location>
        <begin position="383"/>
        <end position="561"/>
    </location>
</feature>
<feature type="region of interest" description="Disordered" evidence="4">
    <location>
        <begin position="1"/>
        <end position="32"/>
    </location>
</feature>
<comment type="function">
    <text evidence="1 2">Involved in the maturation of specific proteins in the endoplasmic reticulum. Required for maturation and transport of active lipoprotein lipase (LPL) through the secretory pathway. Each LMF1 molecule chaperones 50 or more molecules of LPL (By similarity).</text>
</comment>
<comment type="subunit">
    <text evidence="1">Interacts with LPL and SEL1L.</text>
</comment>
<comment type="subcellular location">
    <subcellularLocation>
        <location evidence="1">Endoplasmic reticulum membrane</location>
        <topology evidence="1">Multi-pass membrane protein</topology>
    </subcellularLocation>
</comment>
<comment type="similarity">
    <text evidence="5">Belongs to the lipase maturation factor family.</text>
</comment>
<dbReference type="EMBL" id="BC120253">
    <property type="protein sequence ID" value="AAI20254.1"/>
    <property type="molecule type" value="mRNA"/>
</dbReference>
<dbReference type="RefSeq" id="NP_001068658.1">
    <property type="nucleotide sequence ID" value="NM_001075190.2"/>
</dbReference>
<dbReference type="FunCoup" id="Q0P5C0">
    <property type="interactions" value="554"/>
</dbReference>
<dbReference type="STRING" id="9913.ENSBTAP00000064052"/>
<dbReference type="PaxDb" id="9913-ENSBTAP00000004206"/>
<dbReference type="GeneID" id="505124"/>
<dbReference type="KEGG" id="bta:505124"/>
<dbReference type="CTD" id="64788"/>
<dbReference type="eggNOG" id="ENOG502QT4H">
    <property type="taxonomic scope" value="Eukaryota"/>
</dbReference>
<dbReference type="HOGENOM" id="CLU_020557_2_0_1"/>
<dbReference type="InParanoid" id="Q0P5C0"/>
<dbReference type="OrthoDB" id="434126at2759"/>
<dbReference type="TreeFam" id="TF314339"/>
<dbReference type="Proteomes" id="UP000009136">
    <property type="component" value="Unplaced"/>
</dbReference>
<dbReference type="GO" id="GO:0005789">
    <property type="term" value="C:endoplasmic reticulum membrane"/>
    <property type="evidence" value="ECO:0000318"/>
    <property type="project" value="GO_Central"/>
</dbReference>
<dbReference type="GO" id="GO:0051604">
    <property type="term" value="P:protein maturation"/>
    <property type="evidence" value="ECO:0000318"/>
    <property type="project" value="GO_Central"/>
</dbReference>
<dbReference type="GO" id="GO:0006641">
    <property type="term" value="P:triglyceride metabolic process"/>
    <property type="evidence" value="ECO:0000250"/>
    <property type="project" value="UniProtKB"/>
</dbReference>
<dbReference type="InterPro" id="IPR009613">
    <property type="entry name" value="LMF"/>
</dbReference>
<dbReference type="PANTHER" id="PTHR14463">
    <property type="entry name" value="LIPASE MATURATION FACTOR"/>
    <property type="match status" value="1"/>
</dbReference>
<dbReference type="PANTHER" id="PTHR14463:SF10">
    <property type="entry name" value="LIPASE MATURATION FACTOR 1"/>
    <property type="match status" value="1"/>
</dbReference>
<dbReference type="Pfam" id="PF06762">
    <property type="entry name" value="LMF1"/>
    <property type="match status" value="1"/>
</dbReference>
<dbReference type="Pfam" id="PF25179">
    <property type="entry name" value="LMF1_C"/>
    <property type="match status" value="1"/>
</dbReference>
<sequence length="561" mass="64022">MAAPRESLRRRKAGAGDPEPEAPPGQGRDLKGRPARLRAGTFWLTRIVLLRALAFVYFVAFLVAFHQNKQLIGDRGLLPCRAYLQSVQRHFGGRVSWDALSYAPTILWLLDWSHMDANLDALALLGLGISSFILVSGCANMVLMAALWVLYMSLVNVGQIWYSFGWESQLLETGFLGIFLCPLWTLSALPRGTPTSWVVMWGFRWLIFRIMLGAGLIKIRGDRCWRDLTCMDFHYETQPVPNPVAYFLHRSPWWFHRFETLSNHFLELVVPFFIFLGRRMCIVHGALQVLFQVVLIISGNLSFLNWLTIVPSLACFDDATLGGLFPSGPGRLKDQVLKIQEEETRGARAPRTRGSVARGTVNLALGILVAWLSIPVVLNLLSPRQVMNSSFNPLRIVNTYGAFGSITRERTEVILQGTASANASAPDSAWEDYEFKCKPGDPRRRPCLISPYHHRLDWLMWFAAFQTYEHNEWIIHLAGKLLANDAQALSLLARNPFEGRDPPRWVRGEHYRYKFSRPGGRHAAEGKWWIRRRLGPYFPPLSRQDLRGYFTSRQWPYPEPE</sequence>
<protein>
    <recommendedName>
        <fullName>Lipase maturation factor 1</fullName>
    </recommendedName>
    <alternativeName>
        <fullName>Transmembrane protein 112</fullName>
    </alternativeName>
</protein>
<reference key="1">
    <citation type="submission" date="2006-08" db="EMBL/GenBank/DDBJ databases">
        <authorList>
            <consortium name="NIH - Mammalian Gene Collection (MGC) project"/>
        </authorList>
    </citation>
    <scope>NUCLEOTIDE SEQUENCE [LARGE SCALE MRNA]</scope>
    <source>
        <strain>Hereford</strain>
        <tissue>Fetal pons</tissue>
    </source>
</reference>
<proteinExistence type="evidence at transcript level"/>
<name>LMF1_BOVIN</name>
<organism>
    <name type="scientific">Bos taurus</name>
    <name type="common">Bovine</name>
    <dbReference type="NCBI Taxonomy" id="9913"/>
    <lineage>
        <taxon>Eukaryota</taxon>
        <taxon>Metazoa</taxon>
        <taxon>Chordata</taxon>
        <taxon>Craniata</taxon>
        <taxon>Vertebrata</taxon>
        <taxon>Euteleostomi</taxon>
        <taxon>Mammalia</taxon>
        <taxon>Eutheria</taxon>
        <taxon>Laurasiatheria</taxon>
        <taxon>Artiodactyla</taxon>
        <taxon>Ruminantia</taxon>
        <taxon>Pecora</taxon>
        <taxon>Bovidae</taxon>
        <taxon>Bovinae</taxon>
        <taxon>Bos</taxon>
    </lineage>
</organism>
<keyword id="KW-0143">Chaperone</keyword>
<keyword id="KW-0256">Endoplasmic reticulum</keyword>
<keyword id="KW-0472">Membrane</keyword>
<keyword id="KW-1185">Reference proteome</keyword>
<keyword id="KW-0812">Transmembrane</keyword>
<keyword id="KW-1133">Transmembrane helix</keyword>